<gene>
    <name evidence="1" type="primary">pyrH</name>
    <name type="ordered locus">LBUL_1252</name>
</gene>
<reference key="1">
    <citation type="journal article" date="2006" name="Proc. Natl. Acad. Sci. U.S.A.">
        <title>Comparative genomics of the lactic acid bacteria.</title>
        <authorList>
            <person name="Makarova K.S."/>
            <person name="Slesarev A."/>
            <person name="Wolf Y.I."/>
            <person name="Sorokin A."/>
            <person name="Mirkin B."/>
            <person name="Koonin E.V."/>
            <person name="Pavlov A."/>
            <person name="Pavlova N."/>
            <person name="Karamychev V."/>
            <person name="Polouchine N."/>
            <person name="Shakhova V."/>
            <person name="Grigoriev I."/>
            <person name="Lou Y."/>
            <person name="Rohksar D."/>
            <person name="Lucas S."/>
            <person name="Huang K."/>
            <person name="Goodstein D.M."/>
            <person name="Hawkins T."/>
            <person name="Plengvidhya V."/>
            <person name="Welker D."/>
            <person name="Hughes J."/>
            <person name="Goh Y."/>
            <person name="Benson A."/>
            <person name="Baldwin K."/>
            <person name="Lee J.-H."/>
            <person name="Diaz-Muniz I."/>
            <person name="Dosti B."/>
            <person name="Smeianov V."/>
            <person name="Wechter W."/>
            <person name="Barabote R."/>
            <person name="Lorca G."/>
            <person name="Altermann E."/>
            <person name="Barrangou R."/>
            <person name="Ganesan B."/>
            <person name="Xie Y."/>
            <person name="Rawsthorne H."/>
            <person name="Tamir D."/>
            <person name="Parker C."/>
            <person name="Breidt F."/>
            <person name="Broadbent J.R."/>
            <person name="Hutkins R."/>
            <person name="O'Sullivan D."/>
            <person name="Steele J."/>
            <person name="Unlu G."/>
            <person name="Saier M.H. Jr."/>
            <person name="Klaenhammer T."/>
            <person name="Richardson P."/>
            <person name="Kozyavkin S."/>
            <person name="Weimer B.C."/>
            <person name="Mills D.A."/>
        </authorList>
    </citation>
    <scope>NUCLEOTIDE SEQUENCE [LARGE SCALE GENOMIC DNA]</scope>
    <source>
        <strain>ATCC BAA-365 / Lb-18</strain>
    </source>
</reference>
<organism>
    <name type="scientific">Lactobacillus delbrueckii subsp. bulgaricus (strain ATCC BAA-365 / Lb-18)</name>
    <dbReference type="NCBI Taxonomy" id="321956"/>
    <lineage>
        <taxon>Bacteria</taxon>
        <taxon>Bacillati</taxon>
        <taxon>Bacillota</taxon>
        <taxon>Bacilli</taxon>
        <taxon>Lactobacillales</taxon>
        <taxon>Lactobacillaceae</taxon>
        <taxon>Lactobacillus</taxon>
    </lineage>
</organism>
<accession>Q049U4</accession>
<evidence type="ECO:0000255" key="1">
    <source>
        <dbReference type="HAMAP-Rule" id="MF_01220"/>
    </source>
</evidence>
<name>PYRH_LACDB</name>
<proteinExistence type="inferred from homology"/>
<dbReference type="EC" id="2.7.4.22" evidence="1"/>
<dbReference type="EMBL" id="CP000412">
    <property type="protein sequence ID" value="ABJ58778.1"/>
    <property type="molecule type" value="Genomic_DNA"/>
</dbReference>
<dbReference type="RefSeq" id="WP_003618573.1">
    <property type="nucleotide sequence ID" value="NC_008529.1"/>
</dbReference>
<dbReference type="SMR" id="Q049U4"/>
<dbReference type="KEGG" id="lbu:LBUL_1252"/>
<dbReference type="HOGENOM" id="CLU_033861_0_0_9"/>
<dbReference type="BioCyc" id="LDEL321956:LBUL_RS05880-MONOMER"/>
<dbReference type="UniPathway" id="UPA00159">
    <property type="reaction ID" value="UER00275"/>
</dbReference>
<dbReference type="GO" id="GO:0005737">
    <property type="term" value="C:cytoplasm"/>
    <property type="evidence" value="ECO:0007669"/>
    <property type="project" value="UniProtKB-SubCell"/>
</dbReference>
<dbReference type="GO" id="GO:0005524">
    <property type="term" value="F:ATP binding"/>
    <property type="evidence" value="ECO:0007669"/>
    <property type="project" value="UniProtKB-KW"/>
</dbReference>
<dbReference type="GO" id="GO:0033862">
    <property type="term" value="F:UMP kinase activity"/>
    <property type="evidence" value="ECO:0007669"/>
    <property type="project" value="UniProtKB-EC"/>
</dbReference>
<dbReference type="GO" id="GO:0044210">
    <property type="term" value="P:'de novo' CTP biosynthetic process"/>
    <property type="evidence" value="ECO:0007669"/>
    <property type="project" value="UniProtKB-UniRule"/>
</dbReference>
<dbReference type="GO" id="GO:0006225">
    <property type="term" value="P:UDP biosynthetic process"/>
    <property type="evidence" value="ECO:0007669"/>
    <property type="project" value="TreeGrafter"/>
</dbReference>
<dbReference type="CDD" id="cd04254">
    <property type="entry name" value="AAK_UMPK-PyrH-Ec"/>
    <property type="match status" value="1"/>
</dbReference>
<dbReference type="FunFam" id="3.40.1160.10:FF:000001">
    <property type="entry name" value="Uridylate kinase"/>
    <property type="match status" value="1"/>
</dbReference>
<dbReference type="Gene3D" id="3.40.1160.10">
    <property type="entry name" value="Acetylglutamate kinase-like"/>
    <property type="match status" value="1"/>
</dbReference>
<dbReference type="HAMAP" id="MF_01220_B">
    <property type="entry name" value="PyrH_B"/>
    <property type="match status" value="1"/>
</dbReference>
<dbReference type="InterPro" id="IPR036393">
    <property type="entry name" value="AceGlu_kinase-like_sf"/>
</dbReference>
<dbReference type="InterPro" id="IPR001048">
    <property type="entry name" value="Asp/Glu/Uridylate_kinase"/>
</dbReference>
<dbReference type="InterPro" id="IPR011817">
    <property type="entry name" value="Uridylate_kinase"/>
</dbReference>
<dbReference type="InterPro" id="IPR015963">
    <property type="entry name" value="Uridylate_kinase_bac"/>
</dbReference>
<dbReference type="NCBIfam" id="TIGR02075">
    <property type="entry name" value="pyrH_bact"/>
    <property type="match status" value="1"/>
</dbReference>
<dbReference type="PANTHER" id="PTHR42833">
    <property type="entry name" value="URIDYLATE KINASE"/>
    <property type="match status" value="1"/>
</dbReference>
<dbReference type="PANTHER" id="PTHR42833:SF4">
    <property type="entry name" value="URIDYLATE KINASE PUMPKIN, CHLOROPLASTIC"/>
    <property type="match status" value="1"/>
</dbReference>
<dbReference type="Pfam" id="PF00696">
    <property type="entry name" value="AA_kinase"/>
    <property type="match status" value="1"/>
</dbReference>
<dbReference type="PIRSF" id="PIRSF005650">
    <property type="entry name" value="Uridylate_kin"/>
    <property type="match status" value="1"/>
</dbReference>
<dbReference type="SUPFAM" id="SSF53633">
    <property type="entry name" value="Carbamate kinase-like"/>
    <property type="match status" value="1"/>
</dbReference>
<feature type="chain" id="PRO_1000053940" description="Uridylate kinase">
    <location>
        <begin position="1"/>
        <end position="241"/>
    </location>
</feature>
<feature type="region of interest" description="Involved in allosteric activation by GTP" evidence="1">
    <location>
        <begin position="20"/>
        <end position="25"/>
    </location>
</feature>
<feature type="binding site" evidence="1">
    <location>
        <begin position="12"/>
        <end position="15"/>
    </location>
    <ligand>
        <name>ATP</name>
        <dbReference type="ChEBI" id="CHEBI:30616"/>
    </ligand>
</feature>
<feature type="binding site" evidence="1">
    <location>
        <position position="54"/>
    </location>
    <ligand>
        <name>UMP</name>
        <dbReference type="ChEBI" id="CHEBI:57865"/>
    </ligand>
</feature>
<feature type="binding site" evidence="1">
    <location>
        <position position="55"/>
    </location>
    <ligand>
        <name>ATP</name>
        <dbReference type="ChEBI" id="CHEBI:30616"/>
    </ligand>
</feature>
<feature type="binding site" evidence="1">
    <location>
        <position position="59"/>
    </location>
    <ligand>
        <name>ATP</name>
        <dbReference type="ChEBI" id="CHEBI:30616"/>
    </ligand>
</feature>
<feature type="binding site" evidence="1">
    <location>
        <position position="74"/>
    </location>
    <ligand>
        <name>UMP</name>
        <dbReference type="ChEBI" id="CHEBI:57865"/>
    </ligand>
</feature>
<feature type="binding site" evidence="1">
    <location>
        <begin position="135"/>
        <end position="142"/>
    </location>
    <ligand>
        <name>UMP</name>
        <dbReference type="ChEBI" id="CHEBI:57865"/>
    </ligand>
</feature>
<feature type="binding site" evidence="1">
    <location>
        <position position="163"/>
    </location>
    <ligand>
        <name>ATP</name>
        <dbReference type="ChEBI" id="CHEBI:30616"/>
    </ligand>
</feature>
<feature type="binding site" evidence="1">
    <location>
        <position position="169"/>
    </location>
    <ligand>
        <name>ATP</name>
        <dbReference type="ChEBI" id="CHEBI:30616"/>
    </ligand>
</feature>
<feature type="binding site" evidence="1">
    <location>
        <position position="172"/>
    </location>
    <ligand>
        <name>ATP</name>
        <dbReference type="ChEBI" id="CHEBI:30616"/>
    </ligand>
</feature>
<protein>
    <recommendedName>
        <fullName evidence="1">Uridylate kinase</fullName>
        <shortName evidence="1">UK</shortName>
        <ecNumber evidence="1">2.7.4.22</ecNumber>
    </recommendedName>
    <alternativeName>
        <fullName evidence="1">Uridine monophosphate kinase</fullName>
        <shortName evidence="1">UMP kinase</shortName>
        <shortName evidence="1">UMPK</shortName>
    </alternativeName>
</protein>
<sequence length="241" mass="25889">MSQVKYNRIILKISGEALAGEKGTGIDPTVIKKLAHEIKLVHDMGVQIGVVCGGGNMWRGETGAKLGMERAQADYMGMLATIMNGLALQDGLETAGVQTRLQTSISMRQVAEPYIRRVAISHMEKNRVVIFGGGTGNPYFSTDTTAALRAAEINADVILMAKNGVDGVYTADPNLDPSAKKFAELTQLDMISKGLQVMDRTASSLSMDTHIPLIVFNVNTPGNIKRVVEGENIGTIIRGDK</sequence>
<comment type="function">
    <text evidence="1">Catalyzes the reversible phosphorylation of UMP to UDP.</text>
</comment>
<comment type="catalytic activity">
    <reaction evidence="1">
        <text>UMP + ATP = UDP + ADP</text>
        <dbReference type="Rhea" id="RHEA:24400"/>
        <dbReference type="ChEBI" id="CHEBI:30616"/>
        <dbReference type="ChEBI" id="CHEBI:57865"/>
        <dbReference type="ChEBI" id="CHEBI:58223"/>
        <dbReference type="ChEBI" id="CHEBI:456216"/>
        <dbReference type="EC" id="2.7.4.22"/>
    </reaction>
</comment>
<comment type="activity regulation">
    <text evidence="1">Allosterically activated by GTP. Inhibited by UTP.</text>
</comment>
<comment type="pathway">
    <text evidence="1">Pyrimidine metabolism; CTP biosynthesis via de novo pathway; UDP from UMP (UMPK route): step 1/1.</text>
</comment>
<comment type="subunit">
    <text evidence="1">Homohexamer.</text>
</comment>
<comment type="subcellular location">
    <subcellularLocation>
        <location evidence="1">Cytoplasm</location>
    </subcellularLocation>
</comment>
<comment type="similarity">
    <text evidence="1">Belongs to the UMP kinase family.</text>
</comment>
<keyword id="KW-0021">Allosteric enzyme</keyword>
<keyword id="KW-0067">ATP-binding</keyword>
<keyword id="KW-0963">Cytoplasm</keyword>
<keyword id="KW-0418">Kinase</keyword>
<keyword id="KW-0547">Nucleotide-binding</keyword>
<keyword id="KW-0665">Pyrimidine biosynthesis</keyword>
<keyword id="KW-0808">Transferase</keyword>